<sequence>MTENSDKVPIALVGPDDVEFCGPPAYATVTVKPSGPARLLKVGAVVLISGAVLLLFGAIGAFYLWKGSDNHIYNVHYTMSINGKLQDGSMEIDARNNLETFKMGSGAEEAIEVNDFQNGITGIRFAGGEKCYIKAQVKARVPEVGTVTQQSISSELEGKIMPVKHEEEALVWVAVGQPVQDNSFLSARVLELCGDLPIFWLKPTYPKEIQRERREVVRKTVPTTTKRPHSGPRGNPGPARMRNDSRPSVQEDSEPFNPDNPYHQEGESMTFDPRLDHEGICCIECRRSYTHCQKICEPLGGYNPWPYNYQGCRSACRVVMPCSWWVARILGMV</sequence>
<reference key="1">
    <citation type="journal article" date="1998" name="Biochem. Biophys. Res. Commun.">
        <title>Expression of cartilage-specific functional matrix chondromodulin-I mRNA in rabbit growth plate chondrocytes and its responsiveness to growth stimuli in vitro.</title>
        <authorList>
            <person name="Shukunami C."/>
            <person name="Hiraki Y."/>
        </authorList>
    </citation>
    <scope>NUCLEOTIDE SEQUENCE [MRNA]</scope>
</reference>
<reference key="2">
    <citation type="journal article" date="2000" name="Pediatr. Nephrol.">
        <title>Chondromodulin-I as a novel cartilage-specific growth-modulating factor.</title>
        <authorList>
            <person name="Hiraki Y."/>
            <person name="Shukunami C."/>
        </authorList>
    </citation>
    <scope>REVIEW</scope>
</reference>
<dbReference type="EMBL" id="AF072129">
    <property type="protein sequence ID" value="AAC36470.1"/>
    <property type="molecule type" value="mRNA"/>
</dbReference>
<dbReference type="RefSeq" id="NP_001075509.1">
    <property type="nucleotide sequence ID" value="NM_001082040.1"/>
</dbReference>
<dbReference type="SMR" id="O77770"/>
<dbReference type="FunCoup" id="O77770">
    <property type="interactions" value="151"/>
</dbReference>
<dbReference type="STRING" id="9986.ENSOCUP00000005069"/>
<dbReference type="GlyCosmos" id="O77770">
    <property type="glycosylation" value="1 site, No reported glycans"/>
</dbReference>
<dbReference type="PaxDb" id="9986-ENSOCUP00000005069"/>
<dbReference type="GeneID" id="100008692"/>
<dbReference type="KEGG" id="ocu:100008692"/>
<dbReference type="CTD" id="11061"/>
<dbReference type="eggNOG" id="ENOG502QVPC">
    <property type="taxonomic scope" value="Eukaryota"/>
</dbReference>
<dbReference type="InParanoid" id="O77770"/>
<dbReference type="OrthoDB" id="5985282at2759"/>
<dbReference type="Proteomes" id="UP000001811">
    <property type="component" value="Unplaced"/>
</dbReference>
<dbReference type="GO" id="GO:0012505">
    <property type="term" value="C:endomembrane system"/>
    <property type="evidence" value="ECO:0007669"/>
    <property type="project" value="UniProtKB-SubCell"/>
</dbReference>
<dbReference type="GO" id="GO:0005576">
    <property type="term" value="C:extracellular region"/>
    <property type="evidence" value="ECO:0007669"/>
    <property type="project" value="UniProtKB-KW"/>
</dbReference>
<dbReference type="GO" id="GO:0016020">
    <property type="term" value="C:membrane"/>
    <property type="evidence" value="ECO:0007669"/>
    <property type="project" value="UniProtKB-KW"/>
</dbReference>
<dbReference type="GO" id="GO:0051216">
    <property type="term" value="P:cartilage development"/>
    <property type="evidence" value="ECO:0007669"/>
    <property type="project" value="UniProtKB-KW"/>
</dbReference>
<dbReference type="GO" id="GO:0030154">
    <property type="term" value="P:cell differentiation"/>
    <property type="evidence" value="ECO:0007669"/>
    <property type="project" value="UniProtKB-KW"/>
</dbReference>
<dbReference type="GO" id="GO:0016525">
    <property type="term" value="P:negative regulation of angiogenesis"/>
    <property type="evidence" value="ECO:0007669"/>
    <property type="project" value="TreeGrafter"/>
</dbReference>
<dbReference type="GO" id="GO:0001937">
    <property type="term" value="P:negative regulation of endothelial cell proliferation"/>
    <property type="evidence" value="ECO:0007669"/>
    <property type="project" value="TreeGrafter"/>
</dbReference>
<dbReference type="FunFam" id="3.30.390.150:FF:000001">
    <property type="entry name" value="leukocyte cell-derived chemotaxin 1"/>
    <property type="match status" value="1"/>
</dbReference>
<dbReference type="Gene3D" id="3.30.390.150">
    <property type="match status" value="1"/>
</dbReference>
<dbReference type="InterPro" id="IPR007084">
    <property type="entry name" value="BRICHOS_dom"/>
</dbReference>
<dbReference type="InterPro" id="IPR043405">
    <property type="entry name" value="Chondromodulin/Tenomodulin"/>
</dbReference>
<dbReference type="PANTHER" id="PTHR14064">
    <property type="entry name" value="CHONDROMODULIN-RELATED"/>
    <property type="match status" value="1"/>
</dbReference>
<dbReference type="PANTHER" id="PTHR14064:SF6">
    <property type="entry name" value="LEUKOCYTE CELL-DERIVED CHEMOTAXIN 1"/>
    <property type="match status" value="1"/>
</dbReference>
<dbReference type="Pfam" id="PF04089">
    <property type="entry name" value="BRICHOS"/>
    <property type="match status" value="1"/>
</dbReference>
<dbReference type="SMART" id="SM01039">
    <property type="entry name" value="BRICHOS"/>
    <property type="match status" value="1"/>
</dbReference>
<dbReference type="PROSITE" id="PS50869">
    <property type="entry name" value="BRICHOS"/>
    <property type="match status" value="1"/>
</dbReference>
<comment type="function">
    <text evidence="1">Bifunctional growth regulator that stimulates the growth of cultured chondrocytes in the presence of basic fibroblast growth factor (FGF) but inhibits the growth of cultured vascular endothelial cells. May contribute to the rapid growth of cartilage and vascular invasion prior to the replacement of cartilage by bone during endochondral bone development. Inhibits in vitro tube formation and mobilization of endothelial cells. Plays a role as antiangiogenic factor in cardiac valves to suppress neovascularization (By similarity).</text>
</comment>
<comment type="subcellular location">
    <molecule>Chondromodulin-1</molecule>
    <subcellularLocation>
        <location evidence="1">Secreted</location>
        <location evidence="1">Extracellular space</location>
        <location evidence="1">Extracellular matrix</location>
    </subcellularLocation>
    <text evidence="1">Accumulated in the inter-territorial matrix of cartilage.</text>
</comment>
<comment type="subcellular location">
    <molecule>Chondrosurfactant protein</molecule>
    <subcellularLocation>
        <location evidence="1">Endomembrane system</location>
        <topology evidence="1">Single-pass membrane protein</topology>
    </subcellularLocation>
</comment>
<comment type="PTM">
    <text evidence="1">After cleavage, the post-translationally modified ChM-I is secreted as a glycoprotein.</text>
</comment>
<comment type="similarity">
    <text evidence="6">Belongs to the chondromodulin-1 family.</text>
</comment>
<evidence type="ECO:0000250" key="1"/>
<evidence type="ECO:0000250" key="2">
    <source>
        <dbReference type="UniProtKB" id="O75829"/>
    </source>
</evidence>
<evidence type="ECO:0000255" key="3"/>
<evidence type="ECO:0000255" key="4">
    <source>
        <dbReference type="PROSITE-ProRule" id="PRU00255"/>
    </source>
</evidence>
<evidence type="ECO:0000256" key="5">
    <source>
        <dbReference type="SAM" id="MobiDB-lite"/>
    </source>
</evidence>
<evidence type="ECO:0000305" key="6"/>
<accession>O77770</accession>
<feature type="chain" id="PRO_0000005355" description="Chondrosurfactant protein" evidence="1">
    <location>
        <begin position="1"/>
        <end position="210"/>
    </location>
</feature>
<feature type="propeptide" id="PRO_0000005356" evidence="3">
    <location>
        <begin position="211"/>
        <end position="214"/>
    </location>
</feature>
<feature type="chain" id="PRO_0000005357" description="Chondromodulin-1">
    <location>
        <begin position="215"/>
        <end position="333"/>
    </location>
</feature>
<feature type="transmembrane region" description="Helical" evidence="3">
    <location>
        <begin position="42"/>
        <end position="62"/>
    </location>
</feature>
<feature type="domain" description="BRICHOS" evidence="4">
    <location>
        <begin position="104"/>
        <end position="201"/>
    </location>
</feature>
<feature type="region of interest" description="Disordered" evidence="5">
    <location>
        <begin position="212"/>
        <end position="269"/>
    </location>
</feature>
<feature type="glycosylation site" description="N-linked (GlcNAc...) asparagine" evidence="3">
    <location>
        <position position="243"/>
    </location>
</feature>
<feature type="disulfide bond" evidence="1">
    <location>
        <begin position="131"/>
        <end position="193"/>
    </location>
</feature>
<feature type="disulfide bond" evidence="1">
    <location>
        <begin position="281"/>
        <end position="285"/>
    </location>
</feature>
<feature type="disulfide bond" evidence="1">
    <location>
        <begin position="282"/>
        <end position="322"/>
    </location>
</feature>
<feature type="disulfide bond" evidence="1">
    <location>
        <begin position="292"/>
        <end position="316"/>
    </location>
</feature>
<feature type="disulfide bond" evidence="1">
    <location>
        <begin position="296"/>
        <end position="312"/>
    </location>
</feature>
<organism>
    <name type="scientific">Oryctolagus cuniculus</name>
    <name type="common">Rabbit</name>
    <dbReference type="NCBI Taxonomy" id="9986"/>
    <lineage>
        <taxon>Eukaryota</taxon>
        <taxon>Metazoa</taxon>
        <taxon>Chordata</taxon>
        <taxon>Craniata</taxon>
        <taxon>Vertebrata</taxon>
        <taxon>Euteleostomi</taxon>
        <taxon>Mammalia</taxon>
        <taxon>Eutheria</taxon>
        <taxon>Euarchontoglires</taxon>
        <taxon>Glires</taxon>
        <taxon>Lagomorpha</taxon>
        <taxon>Leporidae</taxon>
        <taxon>Oryctolagus</taxon>
    </lineage>
</organism>
<keyword id="KW-0891">Chondrogenesis</keyword>
<keyword id="KW-0165">Cleavage on pair of basic residues</keyword>
<keyword id="KW-0217">Developmental protein</keyword>
<keyword id="KW-0221">Differentiation</keyword>
<keyword id="KW-1015">Disulfide bond</keyword>
<keyword id="KW-0272">Extracellular matrix</keyword>
<keyword id="KW-0325">Glycoprotein</keyword>
<keyword id="KW-0472">Membrane</keyword>
<keyword id="KW-1185">Reference proteome</keyword>
<keyword id="KW-0964">Secreted</keyword>
<keyword id="KW-0812">Transmembrane</keyword>
<keyword id="KW-1133">Transmembrane helix</keyword>
<name>CNMD_RABIT</name>
<protein>
    <recommendedName>
        <fullName evidence="6">Leukocyte cell-derived chemotaxin 1</fullName>
    </recommendedName>
    <alternativeName>
        <fullName evidence="2">Chondromodulin</fullName>
    </alternativeName>
    <component>
        <recommendedName>
            <fullName>Chondrosurfactant protein</fullName>
            <shortName>CH-SP</shortName>
        </recommendedName>
    </component>
    <component>
        <recommendedName>
            <fullName>Chondromodulin-1</fullName>
        </recommendedName>
        <alternativeName>
            <fullName>Chondromodulin-I</fullName>
            <shortName>ChM-I</shortName>
        </alternativeName>
    </component>
</protein>
<gene>
    <name evidence="2" type="primary">CNMD</name>
    <name evidence="2" type="synonym">CHMI</name>
    <name evidence="2" type="synonym">LECT1</name>
</gene>
<proteinExistence type="evidence at transcript level"/>